<comment type="function">
    <text evidence="2">Catalyzes the dehydration of D-mannonate. Has no detectable activity with a panel of 70 other acid sugars (in vitro).</text>
</comment>
<comment type="catalytic activity">
    <reaction evidence="2">
        <text>D-mannonate = 2-dehydro-3-deoxy-D-gluconate + H2O</text>
        <dbReference type="Rhea" id="RHEA:20097"/>
        <dbReference type="ChEBI" id="CHEBI:15377"/>
        <dbReference type="ChEBI" id="CHEBI:17767"/>
        <dbReference type="ChEBI" id="CHEBI:57990"/>
        <dbReference type="EC" id="4.2.1.8"/>
    </reaction>
</comment>
<comment type="cofactor">
    <cofactor evidence="2">
        <name>Mg(2+)</name>
        <dbReference type="ChEBI" id="CHEBI:18420"/>
    </cofactor>
    <text evidence="2">Binds 1 Mg(2+) ion per subunit.</text>
</comment>
<comment type="biophysicochemical properties">
    <kinetics>
        <text evidence="2">kcat is 4.0 sec(-1) with D-mannonate.</text>
    </kinetics>
</comment>
<comment type="pathway">
    <text>Carbohydrate metabolism; pentose and glucuronate interconversion.</text>
</comment>
<comment type="similarity">
    <text evidence="3">Belongs to the mandelate racemase/muconate lactonizing enzyme family. GalD subfamily.</text>
</comment>
<reference key="1">
    <citation type="journal article" date="2010" name="J. Bacteriol.">
        <title>Genome sequence of the dioxin-mineralizing bacterium Sphingomonas wittichii RW1.</title>
        <authorList>
            <person name="Miller T.R."/>
            <person name="Delcher A.L."/>
            <person name="Salzberg S.L."/>
            <person name="Saunders E."/>
            <person name="Detter J.C."/>
            <person name="Halden R.U."/>
        </authorList>
    </citation>
    <scope>NUCLEOTIDE SEQUENCE [LARGE SCALE GENOMIC DNA]</scope>
    <source>
        <strain>DSM 6014 / CCUG 31198 / JCM 15750 / NBRC 105917 / EY 4224 / RW1</strain>
    </source>
</reference>
<reference key="2">
    <citation type="journal article" date="2014" name="Biochemistry">
        <title>Discovery of function in the enolase superfamily: D-mannonate and D-gluconate dehydratases in the D-mannonate dehydratase subgroup.</title>
        <authorList>
            <person name="Wichelecki D.J."/>
            <person name="Balthazor B.M."/>
            <person name="Chau A.C."/>
            <person name="Vetting M.W."/>
            <person name="Fedorov A.A."/>
            <person name="Fedorov E.V."/>
            <person name="Lukk T."/>
            <person name="Patskovsky Y.V."/>
            <person name="Stead M.B."/>
            <person name="Hillerich B.S."/>
            <person name="Seidel R.D."/>
            <person name="Almo S.C."/>
            <person name="Gerlt J.A."/>
        </authorList>
    </citation>
    <scope>FUNCTION</scope>
    <scope>CATALYTIC ACTIVITY</scope>
    <scope>COFACTOR</scope>
    <scope>BIOPHYSICOCHEMICAL PROPERTIES</scope>
    <source>
        <strain>DSM 6014 / CCUG 31198 / JCM 15750 / NBRC 105917 / EY 4224 / RW1</strain>
    </source>
</reference>
<name>MAND_RHIWR</name>
<protein>
    <recommendedName>
        <fullName>D-mannonate dehydratase</fullName>
        <shortName>ManD</shortName>
        <ecNumber>4.2.1.8</ecNumber>
    </recommendedName>
</protein>
<proteinExistence type="evidence at protein level"/>
<keyword id="KW-0119">Carbohydrate metabolism</keyword>
<keyword id="KW-0456">Lyase</keyword>
<keyword id="KW-0460">Magnesium</keyword>
<keyword id="KW-0479">Metal-binding</keyword>
<keyword id="KW-1185">Reference proteome</keyword>
<evidence type="ECO:0000250" key="1"/>
<evidence type="ECO:0000269" key="2">
    <source>
    </source>
</evidence>
<evidence type="ECO:0000305" key="3"/>
<organism>
    <name type="scientific">Rhizorhabdus wittichii (strain DSM 6014 / CCUG 31198 / JCM 15750 / NBRC 105917 / EY 4224 / RW1)</name>
    <name type="common">Sphingomonas wittichii</name>
    <dbReference type="NCBI Taxonomy" id="392499"/>
    <lineage>
        <taxon>Bacteria</taxon>
        <taxon>Pseudomonadati</taxon>
        <taxon>Pseudomonadota</taxon>
        <taxon>Alphaproteobacteria</taxon>
        <taxon>Sphingomonadales</taxon>
        <taxon>Sphingomonadaceae</taxon>
        <taxon>Rhizorhabdus</taxon>
    </lineage>
</organism>
<feature type="chain" id="PRO_0000429875" description="D-mannonate dehydratase">
    <location>
        <begin position="1"/>
        <end position="402"/>
    </location>
</feature>
<feature type="active site" description="Proton donor/acceptor" evidence="1">
    <location>
        <position position="159"/>
    </location>
</feature>
<feature type="active site" description="Proton donor/acceptor" evidence="1">
    <location>
        <position position="212"/>
    </location>
</feature>
<feature type="binding site" evidence="1">
    <location>
        <position position="37"/>
    </location>
    <ligand>
        <name>substrate</name>
    </ligand>
</feature>
<feature type="binding site" evidence="1">
    <location>
        <position position="122"/>
    </location>
    <ligand>
        <name>substrate</name>
    </ligand>
</feature>
<feature type="binding site" evidence="1">
    <location>
        <position position="210"/>
    </location>
    <ligand>
        <name>Mg(2+)</name>
        <dbReference type="ChEBI" id="CHEBI:18420"/>
    </ligand>
</feature>
<feature type="binding site" evidence="1">
    <location>
        <position position="236"/>
    </location>
    <ligand>
        <name>Mg(2+)</name>
        <dbReference type="ChEBI" id="CHEBI:18420"/>
    </ligand>
</feature>
<feature type="binding site" evidence="1">
    <location>
        <position position="262"/>
    </location>
    <ligand>
        <name>Mg(2+)</name>
        <dbReference type="ChEBI" id="CHEBI:18420"/>
    </ligand>
</feature>
<feature type="binding site" evidence="1">
    <location>
        <position position="262"/>
    </location>
    <ligand>
        <name>substrate</name>
    </ligand>
</feature>
<feature type="binding site" evidence="1">
    <location>
        <position position="283"/>
    </location>
    <ligand>
        <name>substrate</name>
    </ligand>
</feature>
<feature type="binding site" evidence="1">
    <location>
        <position position="312"/>
    </location>
    <ligand>
        <name>substrate</name>
    </ligand>
</feature>
<feature type="binding site" evidence="1">
    <location>
        <position position="316"/>
    </location>
    <ligand>
        <name>substrate</name>
    </ligand>
</feature>
<feature type="binding site" evidence="1">
    <location>
        <position position="339"/>
    </location>
    <ligand>
        <name>substrate</name>
    </ligand>
</feature>
<feature type="site" description="Important for activity and substrate specificity; Ala is observed in family members with high D-mannonate dehydratase activity that have no activity with D-gluconate" evidence="1">
    <location>
        <position position="314"/>
    </location>
</feature>
<accession>A5V6Z0</accession>
<gene>
    <name type="ordered locus">Swit_1693</name>
</gene>
<dbReference type="EC" id="4.2.1.8"/>
<dbReference type="EMBL" id="CP000699">
    <property type="protein sequence ID" value="ABQ68056.1"/>
    <property type="molecule type" value="Genomic_DNA"/>
</dbReference>
<dbReference type="SMR" id="A5V6Z0"/>
<dbReference type="STRING" id="392499.Swit_1693"/>
<dbReference type="PaxDb" id="392499-Swit_1693"/>
<dbReference type="KEGG" id="swi:Swit_1693"/>
<dbReference type="eggNOG" id="COG4948">
    <property type="taxonomic scope" value="Bacteria"/>
</dbReference>
<dbReference type="HOGENOM" id="CLU_030273_6_1_5"/>
<dbReference type="OrthoDB" id="9802699at2"/>
<dbReference type="UniPathway" id="UPA00246"/>
<dbReference type="Proteomes" id="UP000001989">
    <property type="component" value="Chromosome"/>
</dbReference>
<dbReference type="GO" id="GO:0000287">
    <property type="term" value="F:magnesium ion binding"/>
    <property type="evidence" value="ECO:0000314"/>
    <property type="project" value="UniProtKB"/>
</dbReference>
<dbReference type="GO" id="GO:0008927">
    <property type="term" value="F:mannonate dehydratase activity"/>
    <property type="evidence" value="ECO:0000314"/>
    <property type="project" value="CACAO"/>
</dbReference>
<dbReference type="GO" id="GO:0009063">
    <property type="term" value="P:amino acid catabolic process"/>
    <property type="evidence" value="ECO:0007669"/>
    <property type="project" value="InterPro"/>
</dbReference>
<dbReference type="GO" id="GO:0016052">
    <property type="term" value="P:carbohydrate catabolic process"/>
    <property type="evidence" value="ECO:0000314"/>
    <property type="project" value="UniProtKB"/>
</dbReference>
<dbReference type="FunFam" id="3.20.20.120:FF:000004">
    <property type="entry name" value="D-galactonate dehydratase family protein"/>
    <property type="match status" value="1"/>
</dbReference>
<dbReference type="FunFam" id="3.30.390.10:FF:000002">
    <property type="entry name" value="D-galactonate dehydratase family protein"/>
    <property type="match status" value="1"/>
</dbReference>
<dbReference type="Gene3D" id="3.20.20.120">
    <property type="entry name" value="Enolase-like C-terminal domain"/>
    <property type="match status" value="1"/>
</dbReference>
<dbReference type="Gene3D" id="3.30.390.10">
    <property type="entry name" value="Enolase-like, N-terminal domain"/>
    <property type="match status" value="1"/>
</dbReference>
<dbReference type="InterPro" id="IPR053379">
    <property type="entry name" value="D-mannonate_dehydratase_GalD"/>
</dbReference>
<dbReference type="InterPro" id="IPR034593">
    <property type="entry name" value="DgoD-like"/>
</dbReference>
<dbReference type="InterPro" id="IPR036849">
    <property type="entry name" value="Enolase-like_C_sf"/>
</dbReference>
<dbReference type="InterPro" id="IPR029017">
    <property type="entry name" value="Enolase-like_N"/>
</dbReference>
<dbReference type="InterPro" id="IPR029065">
    <property type="entry name" value="Enolase_C-like"/>
</dbReference>
<dbReference type="InterPro" id="IPR034587">
    <property type="entry name" value="MAND"/>
</dbReference>
<dbReference type="InterPro" id="IPR018110">
    <property type="entry name" value="Mandel_Rmase/mucon_lact_enz_CS"/>
</dbReference>
<dbReference type="InterPro" id="IPR013342">
    <property type="entry name" value="Mandelate_racemase_C"/>
</dbReference>
<dbReference type="InterPro" id="IPR013341">
    <property type="entry name" value="Mandelate_racemase_N_dom"/>
</dbReference>
<dbReference type="NCBIfam" id="NF043051">
    <property type="entry name" value="ManoateDhtManD"/>
    <property type="match status" value="1"/>
</dbReference>
<dbReference type="NCBIfam" id="NF011654">
    <property type="entry name" value="PRK15072.1"/>
    <property type="match status" value="1"/>
</dbReference>
<dbReference type="PANTHER" id="PTHR48080">
    <property type="entry name" value="D-GALACTONATE DEHYDRATASE-RELATED"/>
    <property type="match status" value="1"/>
</dbReference>
<dbReference type="PANTHER" id="PTHR48080:SF6">
    <property type="entry name" value="STARVATION-SENSING PROTEIN RSPA"/>
    <property type="match status" value="1"/>
</dbReference>
<dbReference type="Pfam" id="PF13378">
    <property type="entry name" value="MR_MLE_C"/>
    <property type="match status" value="1"/>
</dbReference>
<dbReference type="Pfam" id="PF02746">
    <property type="entry name" value="MR_MLE_N"/>
    <property type="match status" value="1"/>
</dbReference>
<dbReference type="SFLD" id="SFLDS00001">
    <property type="entry name" value="Enolase"/>
    <property type="match status" value="1"/>
</dbReference>
<dbReference type="SFLD" id="SFLDF00001">
    <property type="entry name" value="mannonate_dehydratase"/>
    <property type="match status" value="1"/>
</dbReference>
<dbReference type="SMART" id="SM00922">
    <property type="entry name" value="MR_MLE"/>
    <property type="match status" value="1"/>
</dbReference>
<dbReference type="SUPFAM" id="SSF51604">
    <property type="entry name" value="Enolase C-terminal domain-like"/>
    <property type="match status" value="1"/>
</dbReference>
<dbReference type="SUPFAM" id="SSF54826">
    <property type="entry name" value="Enolase N-terminal domain-like"/>
    <property type="match status" value="1"/>
</dbReference>
<dbReference type="PROSITE" id="PS00908">
    <property type="entry name" value="MR_MLE_1"/>
    <property type="match status" value="1"/>
</dbReference>
<sequence length="402" mass="45064">MKITGARVIVTCPDRNFVTLKIETDEGLTGIGDATLNGRELAVASYLTDHVIPCLIGRDAHRIEDIWNYLYRGAYWRRGPVTMSAIAAVDTALWDIKAKAAGLPLYQLLGGRSRDGVMVYGHANGRDIEETTDEVARYIEMGYRAIRAQTGVPGLASTYGVSSDKMYYEPADAALPTENIWSTEKYLDHVPKLFDRLRDRFGFDHHLLHDVHHRLTPIEAGRLGKSLEPYRLFWMEDATPAENQEAFRLIRQHTVTPLAVGEVFNTIWDAKDLIQNQLIDYIRATVVHAGGISHLRRIADLAALYQVRTGCHGATDLSPVCMGAALHFDIWVPNFGVQEYMRHTEATDAVFPHAYSFASGYMTPGDVPGHGVEIDEKLAAKYPYKPCSLPVNRLEDGTLWHW</sequence>